<comment type="catalytic activity">
    <reaction evidence="1">
        <text>2-(N(omega)-L-arginino)succinate = fumarate + L-arginine</text>
        <dbReference type="Rhea" id="RHEA:24020"/>
        <dbReference type="ChEBI" id="CHEBI:29806"/>
        <dbReference type="ChEBI" id="CHEBI:32682"/>
        <dbReference type="ChEBI" id="CHEBI:57472"/>
        <dbReference type="EC" id="4.3.2.1"/>
    </reaction>
</comment>
<comment type="pathway">
    <text evidence="1">Amino-acid biosynthesis; L-arginine biosynthesis; L-arginine from L-ornithine and carbamoyl phosphate: step 3/3.</text>
</comment>
<comment type="subcellular location">
    <subcellularLocation>
        <location evidence="1">Cytoplasm</location>
    </subcellularLocation>
</comment>
<comment type="similarity">
    <text evidence="1">Belongs to the lyase 1 family. Argininosuccinate lyase subfamily.</text>
</comment>
<dbReference type="EC" id="4.3.2.1" evidence="1"/>
<dbReference type="EMBL" id="CR555306">
    <property type="protein sequence ID" value="CAI06738.1"/>
    <property type="molecule type" value="Genomic_DNA"/>
</dbReference>
<dbReference type="RefSeq" id="WP_011236468.1">
    <property type="nucleotide sequence ID" value="NC_006513.1"/>
</dbReference>
<dbReference type="SMR" id="Q5P7H3"/>
<dbReference type="STRING" id="76114.ebA1170"/>
<dbReference type="KEGG" id="eba:ebA1170"/>
<dbReference type="eggNOG" id="COG0165">
    <property type="taxonomic scope" value="Bacteria"/>
</dbReference>
<dbReference type="HOGENOM" id="CLU_027272_2_3_4"/>
<dbReference type="OrthoDB" id="9769623at2"/>
<dbReference type="UniPathway" id="UPA00068">
    <property type="reaction ID" value="UER00114"/>
</dbReference>
<dbReference type="Proteomes" id="UP000006552">
    <property type="component" value="Chromosome"/>
</dbReference>
<dbReference type="GO" id="GO:0005829">
    <property type="term" value="C:cytosol"/>
    <property type="evidence" value="ECO:0007669"/>
    <property type="project" value="TreeGrafter"/>
</dbReference>
<dbReference type="GO" id="GO:0004056">
    <property type="term" value="F:argininosuccinate lyase activity"/>
    <property type="evidence" value="ECO:0007669"/>
    <property type="project" value="UniProtKB-UniRule"/>
</dbReference>
<dbReference type="GO" id="GO:0042450">
    <property type="term" value="P:arginine biosynthetic process via ornithine"/>
    <property type="evidence" value="ECO:0007669"/>
    <property type="project" value="InterPro"/>
</dbReference>
<dbReference type="GO" id="GO:0006526">
    <property type="term" value="P:L-arginine biosynthetic process"/>
    <property type="evidence" value="ECO:0007669"/>
    <property type="project" value="UniProtKB-UniRule"/>
</dbReference>
<dbReference type="CDD" id="cd01359">
    <property type="entry name" value="Argininosuccinate_lyase"/>
    <property type="match status" value="1"/>
</dbReference>
<dbReference type="FunFam" id="1.10.275.10:FF:000002">
    <property type="entry name" value="Argininosuccinate lyase"/>
    <property type="match status" value="1"/>
</dbReference>
<dbReference type="FunFam" id="1.10.40.30:FF:000001">
    <property type="entry name" value="Argininosuccinate lyase"/>
    <property type="match status" value="1"/>
</dbReference>
<dbReference type="FunFam" id="1.20.200.10:FF:000015">
    <property type="entry name" value="argininosuccinate lyase isoform X2"/>
    <property type="match status" value="1"/>
</dbReference>
<dbReference type="Gene3D" id="1.10.40.30">
    <property type="entry name" value="Fumarase/aspartase (C-terminal domain)"/>
    <property type="match status" value="1"/>
</dbReference>
<dbReference type="Gene3D" id="1.20.200.10">
    <property type="entry name" value="Fumarase/aspartase (Central domain)"/>
    <property type="match status" value="1"/>
</dbReference>
<dbReference type="Gene3D" id="1.10.275.10">
    <property type="entry name" value="Fumarase/aspartase (N-terminal domain)"/>
    <property type="match status" value="1"/>
</dbReference>
<dbReference type="HAMAP" id="MF_00006">
    <property type="entry name" value="Arg_succ_lyase"/>
    <property type="match status" value="1"/>
</dbReference>
<dbReference type="InterPro" id="IPR029419">
    <property type="entry name" value="Arg_succ_lyase_C"/>
</dbReference>
<dbReference type="InterPro" id="IPR009049">
    <property type="entry name" value="Argininosuccinate_lyase"/>
</dbReference>
<dbReference type="InterPro" id="IPR024083">
    <property type="entry name" value="Fumarase/histidase_N"/>
</dbReference>
<dbReference type="InterPro" id="IPR020557">
    <property type="entry name" value="Fumarate_lyase_CS"/>
</dbReference>
<dbReference type="InterPro" id="IPR000362">
    <property type="entry name" value="Fumarate_lyase_fam"/>
</dbReference>
<dbReference type="InterPro" id="IPR022761">
    <property type="entry name" value="Fumarate_lyase_N"/>
</dbReference>
<dbReference type="InterPro" id="IPR008948">
    <property type="entry name" value="L-Aspartase-like"/>
</dbReference>
<dbReference type="NCBIfam" id="TIGR00838">
    <property type="entry name" value="argH"/>
    <property type="match status" value="1"/>
</dbReference>
<dbReference type="PANTHER" id="PTHR43814">
    <property type="entry name" value="ARGININOSUCCINATE LYASE"/>
    <property type="match status" value="1"/>
</dbReference>
<dbReference type="PANTHER" id="PTHR43814:SF1">
    <property type="entry name" value="ARGININOSUCCINATE LYASE"/>
    <property type="match status" value="1"/>
</dbReference>
<dbReference type="Pfam" id="PF14698">
    <property type="entry name" value="ASL_C2"/>
    <property type="match status" value="1"/>
</dbReference>
<dbReference type="Pfam" id="PF00206">
    <property type="entry name" value="Lyase_1"/>
    <property type="match status" value="1"/>
</dbReference>
<dbReference type="PRINTS" id="PR00145">
    <property type="entry name" value="ARGSUCLYASE"/>
</dbReference>
<dbReference type="PRINTS" id="PR00149">
    <property type="entry name" value="FUMRATELYASE"/>
</dbReference>
<dbReference type="SUPFAM" id="SSF48557">
    <property type="entry name" value="L-aspartase-like"/>
    <property type="match status" value="1"/>
</dbReference>
<dbReference type="PROSITE" id="PS00163">
    <property type="entry name" value="FUMARATE_LYASES"/>
    <property type="match status" value="1"/>
</dbReference>
<reference key="1">
    <citation type="journal article" date="2005" name="Arch. Microbiol.">
        <title>The genome sequence of an anaerobic aromatic-degrading denitrifying bacterium, strain EbN1.</title>
        <authorList>
            <person name="Rabus R."/>
            <person name="Kube M."/>
            <person name="Heider J."/>
            <person name="Beck A."/>
            <person name="Heitmann K."/>
            <person name="Widdel F."/>
            <person name="Reinhardt R."/>
        </authorList>
    </citation>
    <scope>NUCLEOTIDE SEQUENCE [LARGE SCALE GENOMIC DNA]</scope>
    <source>
        <strain>DSM 19018 / LMG 30748 / EbN1</strain>
    </source>
</reference>
<sequence length="465" mass="51211">MTDTSSSQPAKAWSGRFSEPVSDLVKRYTASVSFDQRMAQQDIRGSLAHAKMLARQGIIGATDLADIERGMVQIRGEIERGEFAWNLDDEDVHLNIEKRLTALVGNPGKRLHTGRSRNDQVATDIRLWLRDAIDRILALIGEFQKNLLDVAEANAATPMPGFTHLQVAQPVTFGHHLMAYFEMSRRDAERFTDCRKRVNRLPLGAAALAGTSYPIDREFVARELGFDEVCHNSLDAVSDRDFAIEFCAASALLMTHLSRLSEELILWMSPRVGFIDLADRFCTGSSIMPQKKNPDVPELVRGKTGRVNGSLIALLTLMKGQPLAYNKDNQEDKEPLFDTADTVIDTLRIYADMITGIRVKADAMRDALKQGYATATDLADYLVKKGLPFRDAHEAVALAVRAAEAKGCDLPDFSLDELRAFSPLVGEDVFAVLTVEGSLASRAHVGGTAPEQVRAAITRARGKNA</sequence>
<feature type="chain" id="PRO_0000240711" description="Argininosuccinate lyase">
    <location>
        <begin position="1"/>
        <end position="465"/>
    </location>
</feature>
<protein>
    <recommendedName>
        <fullName evidence="1">Argininosuccinate lyase</fullName>
        <shortName evidence="1">ASAL</shortName>
        <ecNumber evidence="1">4.3.2.1</ecNumber>
    </recommendedName>
    <alternativeName>
        <fullName evidence="1">Arginosuccinase</fullName>
    </alternativeName>
</protein>
<accession>Q5P7H3</accession>
<evidence type="ECO:0000255" key="1">
    <source>
        <dbReference type="HAMAP-Rule" id="MF_00006"/>
    </source>
</evidence>
<organism>
    <name type="scientific">Aromatoleum aromaticum (strain DSM 19018 / LMG 30748 / EbN1)</name>
    <name type="common">Azoarcus sp. (strain EbN1)</name>
    <dbReference type="NCBI Taxonomy" id="76114"/>
    <lineage>
        <taxon>Bacteria</taxon>
        <taxon>Pseudomonadati</taxon>
        <taxon>Pseudomonadota</taxon>
        <taxon>Betaproteobacteria</taxon>
        <taxon>Rhodocyclales</taxon>
        <taxon>Rhodocyclaceae</taxon>
        <taxon>Aromatoleum</taxon>
    </lineage>
</organism>
<proteinExistence type="inferred from homology"/>
<name>ARLY_AROAE</name>
<gene>
    <name evidence="1" type="primary">argH</name>
    <name type="ordered locus">AZOSEA06160</name>
    <name type="ORF">ebA1170</name>
</gene>
<keyword id="KW-0028">Amino-acid biosynthesis</keyword>
<keyword id="KW-0055">Arginine biosynthesis</keyword>
<keyword id="KW-0963">Cytoplasm</keyword>
<keyword id="KW-0456">Lyase</keyword>
<keyword id="KW-1185">Reference proteome</keyword>